<name>Y1297_NEIG1</name>
<accession>Q5F786</accession>
<organism>
    <name type="scientific">Neisseria gonorrhoeae (strain ATCC 700825 / FA 1090)</name>
    <dbReference type="NCBI Taxonomy" id="242231"/>
    <lineage>
        <taxon>Bacteria</taxon>
        <taxon>Pseudomonadati</taxon>
        <taxon>Pseudomonadota</taxon>
        <taxon>Betaproteobacteria</taxon>
        <taxon>Neisseriales</taxon>
        <taxon>Neisseriaceae</taxon>
        <taxon>Neisseria</taxon>
    </lineage>
</organism>
<proteinExistence type="inferred from homology"/>
<reference key="1">
    <citation type="submission" date="2003-03" db="EMBL/GenBank/DDBJ databases">
        <title>The complete genome sequence of Neisseria gonorrhoeae.</title>
        <authorList>
            <person name="Lewis L.A."/>
            <person name="Gillaspy A.F."/>
            <person name="McLaughlin R.E."/>
            <person name="Gipson M."/>
            <person name="Ducey T.F."/>
            <person name="Ownbey T."/>
            <person name="Hartman K."/>
            <person name="Nydick C."/>
            <person name="Carson M.B."/>
            <person name="Vaughn J."/>
            <person name="Thomson C."/>
            <person name="Song L."/>
            <person name="Lin S."/>
            <person name="Yuan X."/>
            <person name="Najar F."/>
            <person name="Zhan M."/>
            <person name="Ren Q."/>
            <person name="Zhu H."/>
            <person name="Qi S."/>
            <person name="Kenton S.M."/>
            <person name="Lai H."/>
            <person name="White J.D."/>
            <person name="Clifton S."/>
            <person name="Roe B.A."/>
            <person name="Dyer D.W."/>
        </authorList>
    </citation>
    <scope>NUCLEOTIDE SEQUENCE [LARGE SCALE GENOMIC DNA]</scope>
    <source>
        <strain>ATCC 700825 / FA 1090</strain>
    </source>
</reference>
<evidence type="ECO:0000255" key="1">
    <source>
        <dbReference type="HAMAP-Rule" id="MF_01221"/>
    </source>
</evidence>
<comment type="subunit">
    <text evidence="1">Homodimer.</text>
</comment>
<comment type="similarity">
    <text evidence="1">Belongs to the UPF0210 family.</text>
</comment>
<gene>
    <name type="ordered locus">NGO_1297</name>
</gene>
<keyword id="KW-1185">Reference proteome</keyword>
<protein>
    <recommendedName>
        <fullName evidence="1">UPF0210 protein NGO_1297</fullName>
    </recommendedName>
</protein>
<dbReference type="EMBL" id="AE004969">
    <property type="protein sequence ID" value="AAW89951.1"/>
    <property type="molecule type" value="Genomic_DNA"/>
</dbReference>
<dbReference type="RefSeq" id="WP_003691602.1">
    <property type="nucleotide sequence ID" value="NC_002946.2"/>
</dbReference>
<dbReference type="RefSeq" id="YP_208363.1">
    <property type="nucleotide sequence ID" value="NC_002946.2"/>
</dbReference>
<dbReference type="SMR" id="Q5F786"/>
<dbReference type="STRING" id="242231.NGO_1297"/>
<dbReference type="KEGG" id="ngo:NGO_1297"/>
<dbReference type="PATRIC" id="fig|242231.10.peg.1525"/>
<dbReference type="HOGENOM" id="CLU_048704_0_0_4"/>
<dbReference type="Proteomes" id="UP000000535">
    <property type="component" value="Chromosome"/>
</dbReference>
<dbReference type="CDD" id="cd08025">
    <property type="entry name" value="RNR_PFL_like_DUF711"/>
    <property type="match status" value="1"/>
</dbReference>
<dbReference type="Gene3D" id="3.20.70.20">
    <property type="match status" value="1"/>
</dbReference>
<dbReference type="HAMAP" id="MF_01221">
    <property type="entry name" value="UPF0210"/>
    <property type="match status" value="1"/>
</dbReference>
<dbReference type="InterPro" id="IPR007841">
    <property type="entry name" value="UPF0210"/>
</dbReference>
<dbReference type="NCBIfam" id="NF003700">
    <property type="entry name" value="PRK05313.1"/>
    <property type="match status" value="1"/>
</dbReference>
<dbReference type="PANTHER" id="PTHR37560:SF1">
    <property type="entry name" value="UPF0210 PROTEIN MJ1665"/>
    <property type="match status" value="1"/>
</dbReference>
<dbReference type="PANTHER" id="PTHR37560">
    <property type="entry name" value="UPF0210 PROTEIN SPR0218"/>
    <property type="match status" value="1"/>
</dbReference>
<dbReference type="Pfam" id="PF05167">
    <property type="entry name" value="DUF711"/>
    <property type="match status" value="1"/>
</dbReference>
<dbReference type="SUPFAM" id="SSF51998">
    <property type="entry name" value="PFL-like glycyl radical enzymes"/>
    <property type="match status" value="1"/>
</dbReference>
<sequence length="451" mass="46335">MSIQSGEILETVKMVADQNFDVRTITIGIDLHDCISTDIDVLNQNIYNKITTVGKDLVATAKHLSAKYGVPIVNQRISVTPIAQIAAATKADSYVSVAQTLDKAAKAIGVSFIGGFSALVQKGMSPSDEVLIRSVPEAMKTTDIVCSSINIGSTRAGINMDAVKLAGETIKRTAEITPEGFGCAKIVVFCNAVEDNPFMAGAFHGSGEADAVINVGVSGPGVVKAALENSDAVSLTEVAEVVKKTAFKITRVGELIGREASKMLNIPFGILDLSLAPTPAVGDSVARILEEMGLSVCGTHGTTAALALLNDAVKKGGMMASSAVGGLSGAFIPVSEDEGMIAAAEAGVLTLDKLEAMTAVCSVGLDMIAVPGDTPAHTISGIIADEAAIGMINSKTTAVRIIPVTGKTVGDSVEFGGLLGYAPVMPAKEGSCEVFVNRGGRIPAPVQSMKN</sequence>
<feature type="chain" id="PRO_1000066770" description="UPF0210 protein NGO_1297">
    <location>
        <begin position="1"/>
        <end position="451"/>
    </location>
</feature>